<accession>P29372</accession>
<accession>G5E9E2</accession>
<accession>Q13770</accession>
<accession>Q15275</accession>
<accession>Q15961</accession>
<accession>Q5J9I4</accession>
<accession>Q96BZ6</accession>
<accession>Q96S33</accession>
<accession>Q9NNX5</accession>
<proteinExistence type="evidence at protein level"/>
<dbReference type="EC" id="3.2.2.21"/>
<dbReference type="EMBL" id="M74905">
    <property type="protein sequence ID" value="AAA58627.1"/>
    <property type="molecule type" value="mRNA"/>
</dbReference>
<dbReference type="EMBL" id="L10752">
    <property type="protein sequence ID" value="AAF77073.1"/>
    <property type="molecule type" value="mRNA"/>
</dbReference>
<dbReference type="EMBL" id="AY258284">
    <property type="protein sequence ID" value="AAP82229.1"/>
    <property type="molecule type" value="mRNA"/>
</dbReference>
<dbReference type="EMBL" id="AY305873">
    <property type="protein sequence ID" value="AAQ95215.1"/>
    <property type="molecule type" value="mRNA"/>
</dbReference>
<dbReference type="EMBL" id="AF499437">
    <property type="protein sequence ID" value="AAM14628.1"/>
    <property type="molecule type" value="Genomic_DNA"/>
</dbReference>
<dbReference type="EMBL" id="AE006462">
    <property type="protein sequence ID" value="AAK61213.1"/>
    <property type="molecule type" value="Genomic_DNA"/>
</dbReference>
<dbReference type="EMBL" id="Z69720">
    <property type="protein sequence ID" value="CAA93540.1"/>
    <property type="molecule type" value="Genomic_DNA"/>
</dbReference>
<dbReference type="EMBL" id="Z69720">
    <property type="protein sequence ID" value="CAI95610.1"/>
    <property type="molecule type" value="Genomic_DNA"/>
</dbReference>
<dbReference type="EMBL" id="CH471112">
    <property type="protein sequence ID" value="EAW85871.1"/>
    <property type="molecule type" value="Genomic_DNA"/>
</dbReference>
<dbReference type="EMBL" id="BC014991">
    <property type="protein sequence ID" value="AAH14991.1"/>
    <property type="molecule type" value="mRNA"/>
</dbReference>
<dbReference type="EMBL" id="S51033">
    <property type="protein sequence ID" value="AAB19537.1"/>
    <property type="molecule type" value="mRNA"/>
</dbReference>
<dbReference type="EMBL" id="X56528">
    <property type="protein sequence ID" value="CAA39875.1"/>
    <property type="molecule type" value="mRNA"/>
</dbReference>
<dbReference type="EMBL" id="M71215">
    <property type="protein sequence ID" value="AAA58369.1"/>
    <property type="molecule type" value="mRNA"/>
</dbReference>
<dbReference type="EMBL" id="M99626">
    <property type="protein sequence ID" value="AAB46421.1"/>
    <property type="molecule type" value="mRNA"/>
</dbReference>
<dbReference type="CCDS" id="CCDS32345.1">
    <molecule id="P29372-4"/>
</dbReference>
<dbReference type="CCDS" id="CCDS32346.1">
    <molecule id="P29372-1"/>
</dbReference>
<dbReference type="CCDS" id="CCDS42087.1">
    <molecule id="P29372-5"/>
</dbReference>
<dbReference type="PIR" id="A40798">
    <property type="entry name" value="A40798"/>
</dbReference>
<dbReference type="PIR" id="A41230">
    <property type="entry name" value="A41230"/>
</dbReference>
<dbReference type="PIR" id="A47471">
    <property type="entry name" value="A47471"/>
</dbReference>
<dbReference type="PIR" id="JN0062">
    <property type="entry name" value="JN0062"/>
</dbReference>
<dbReference type="RefSeq" id="NP_001015052.1">
    <molecule id="P29372-4"/>
    <property type="nucleotide sequence ID" value="NM_001015052.3"/>
</dbReference>
<dbReference type="RefSeq" id="NP_001015054.1">
    <molecule id="P29372-5"/>
    <property type="nucleotide sequence ID" value="NM_001015054.3"/>
</dbReference>
<dbReference type="RefSeq" id="NP_002425.2">
    <molecule id="P29372-1"/>
    <property type="nucleotide sequence ID" value="NM_002434.4"/>
</dbReference>
<dbReference type="PDB" id="1BNK">
    <property type="method" value="X-ray"/>
    <property type="resolution" value="2.70 A"/>
    <property type="chains" value="A=80-295"/>
</dbReference>
<dbReference type="PDB" id="1EWN">
    <property type="method" value="X-ray"/>
    <property type="resolution" value="2.10 A"/>
    <property type="chains" value="A=80-298"/>
</dbReference>
<dbReference type="PDB" id="1F4R">
    <property type="method" value="X-ray"/>
    <property type="resolution" value="2.40 A"/>
    <property type="chains" value="A=80-298"/>
</dbReference>
<dbReference type="PDB" id="1F6O">
    <property type="method" value="X-ray"/>
    <property type="resolution" value="2.40 A"/>
    <property type="chains" value="A=80-298"/>
</dbReference>
<dbReference type="PDB" id="3QI5">
    <property type="method" value="X-ray"/>
    <property type="resolution" value="2.20 A"/>
    <property type="chains" value="A/B=84-298"/>
</dbReference>
<dbReference type="PDB" id="3UBY">
    <property type="method" value="X-ray"/>
    <property type="resolution" value="2.00 A"/>
    <property type="chains" value="A/B=84-298"/>
</dbReference>
<dbReference type="PDB" id="7XFH">
    <property type="method" value="EM"/>
    <property type="resolution" value="2.90 A"/>
    <property type="chains" value="K=1-298"/>
</dbReference>
<dbReference type="PDB" id="7XFJ">
    <property type="method" value="EM"/>
    <property type="resolution" value="3.00 A"/>
    <property type="chains" value="K=1-298"/>
</dbReference>
<dbReference type="PDB" id="7XFM">
    <property type="method" value="EM"/>
    <property type="resolution" value="3.10 A"/>
    <property type="chains" value="K=1-298"/>
</dbReference>
<dbReference type="PDBsum" id="1BNK"/>
<dbReference type="PDBsum" id="1EWN"/>
<dbReference type="PDBsum" id="1F4R"/>
<dbReference type="PDBsum" id="1F6O"/>
<dbReference type="PDBsum" id="3QI5"/>
<dbReference type="PDBsum" id="3UBY"/>
<dbReference type="PDBsum" id="7XFH"/>
<dbReference type="PDBsum" id="7XFJ"/>
<dbReference type="PDBsum" id="7XFM"/>
<dbReference type="EMDB" id="EMD-33172"/>
<dbReference type="EMDB" id="EMD-33174"/>
<dbReference type="EMDB" id="EMD-33176"/>
<dbReference type="SMR" id="P29372"/>
<dbReference type="BioGRID" id="110490">
    <property type="interactions" value="110"/>
</dbReference>
<dbReference type="FunCoup" id="P29372">
    <property type="interactions" value="704"/>
</dbReference>
<dbReference type="IntAct" id="P29372">
    <property type="interactions" value="29"/>
</dbReference>
<dbReference type="MINT" id="P29372"/>
<dbReference type="STRING" id="9606.ENSP00000219431"/>
<dbReference type="BindingDB" id="P29372"/>
<dbReference type="ChEMBL" id="CHEMBL3396943"/>
<dbReference type="DrugBank" id="DB00515">
    <property type="generic name" value="Cisplatin"/>
</dbReference>
<dbReference type="DrugBank" id="DB01593">
    <property type="generic name" value="Zinc"/>
</dbReference>
<dbReference type="DrugBank" id="DB14487">
    <property type="generic name" value="Zinc acetate"/>
</dbReference>
<dbReference type="DrugBank" id="DB14533">
    <property type="generic name" value="Zinc chloride"/>
</dbReference>
<dbReference type="DrugBank" id="DB14548">
    <property type="generic name" value="Zinc sulfate, unspecified form"/>
</dbReference>
<dbReference type="DrugCentral" id="P29372"/>
<dbReference type="GlyGen" id="P29372">
    <property type="glycosylation" value="11 sites, 2 N-linked glycans (2 sites), 1 O-linked glycan (5 sites)"/>
</dbReference>
<dbReference type="iPTMnet" id="P29372"/>
<dbReference type="PhosphoSitePlus" id="P29372"/>
<dbReference type="SwissPalm" id="P29372"/>
<dbReference type="BioMuta" id="MPG"/>
<dbReference type="jPOST" id="P29372"/>
<dbReference type="MassIVE" id="P29372"/>
<dbReference type="PaxDb" id="9606-ENSP00000219431"/>
<dbReference type="PeptideAtlas" id="P29372"/>
<dbReference type="ProteomicsDB" id="33913"/>
<dbReference type="ProteomicsDB" id="54553">
    <molecule id="P29372-1"/>
</dbReference>
<dbReference type="ProteomicsDB" id="54554">
    <molecule id="P29372-2"/>
</dbReference>
<dbReference type="ProteomicsDB" id="62987"/>
<dbReference type="Pumba" id="P29372"/>
<dbReference type="TopDownProteomics" id="P29372-1">
    <molecule id="P29372-1"/>
</dbReference>
<dbReference type="Antibodypedia" id="1865">
    <property type="antibodies" value="420 antibodies from 35 providers"/>
</dbReference>
<dbReference type="DNASU" id="4350"/>
<dbReference type="Ensembl" id="ENST00000219431.4">
    <molecule id="P29372-1"/>
    <property type="protein sequence ID" value="ENSP00000219431.4"/>
    <property type="gene ID" value="ENSG00000103152.12"/>
</dbReference>
<dbReference type="Ensembl" id="ENST00000356432.8">
    <molecule id="P29372-4"/>
    <property type="protein sequence ID" value="ENSP00000348809.4"/>
    <property type="gene ID" value="ENSG00000103152.12"/>
</dbReference>
<dbReference type="Ensembl" id="ENST00000397817.5">
    <molecule id="P29372-5"/>
    <property type="protein sequence ID" value="ENSP00000380918.1"/>
    <property type="gene ID" value="ENSG00000103152.12"/>
</dbReference>
<dbReference type="GeneID" id="4350"/>
<dbReference type="KEGG" id="hsa:4350"/>
<dbReference type="MANE-Select" id="ENST00000356432.8">
    <molecule id="P29372-4"/>
    <property type="protein sequence ID" value="ENSP00000348809.4"/>
    <property type="RefSeq nucleotide sequence ID" value="NM_001015052.3"/>
    <property type="RefSeq protein sequence ID" value="NP_001015052.1"/>
</dbReference>
<dbReference type="UCSC" id="uc002cfm.4">
    <molecule id="P29372-1"/>
    <property type="organism name" value="human"/>
</dbReference>
<dbReference type="AGR" id="HGNC:7211"/>
<dbReference type="CTD" id="4350"/>
<dbReference type="DisGeNET" id="4350"/>
<dbReference type="GeneCards" id="MPG"/>
<dbReference type="HGNC" id="HGNC:7211">
    <property type="gene designation" value="MPG"/>
</dbReference>
<dbReference type="HPA" id="ENSG00000103152">
    <property type="expression patterns" value="Low tissue specificity"/>
</dbReference>
<dbReference type="MIM" id="156565">
    <property type="type" value="gene"/>
</dbReference>
<dbReference type="neXtProt" id="NX_P29372"/>
<dbReference type="OpenTargets" id="ENSG00000103152"/>
<dbReference type="PharmGKB" id="PA30917"/>
<dbReference type="VEuPathDB" id="HostDB:ENSG00000103152"/>
<dbReference type="eggNOG" id="KOG4486">
    <property type="taxonomic scope" value="Eukaryota"/>
</dbReference>
<dbReference type="GeneTree" id="ENSGT00390000009825"/>
<dbReference type="HOGENOM" id="CLU_060471_0_0_1"/>
<dbReference type="InParanoid" id="P29372"/>
<dbReference type="OMA" id="VEAYHHT"/>
<dbReference type="OrthoDB" id="6353017at2759"/>
<dbReference type="PAN-GO" id="P29372">
    <property type="GO annotations" value="2 GO annotations based on evolutionary models"/>
</dbReference>
<dbReference type="PhylomeDB" id="P29372"/>
<dbReference type="TreeFam" id="TF331768"/>
<dbReference type="BRENDA" id="3.2.2.21">
    <property type="organism ID" value="2681"/>
</dbReference>
<dbReference type="PathwayCommons" id="P29372"/>
<dbReference type="Reactome" id="R-HSA-110330">
    <property type="pathway name" value="Recognition and association of DNA glycosylase with site containing an affected purine"/>
</dbReference>
<dbReference type="Reactome" id="R-HSA-110331">
    <property type="pathway name" value="Cleavage of the damaged purine"/>
</dbReference>
<dbReference type="Reactome" id="R-HSA-110357">
    <property type="pathway name" value="Displacement of DNA glycosylase by APEX1"/>
</dbReference>
<dbReference type="SABIO-RK" id="P29372"/>
<dbReference type="SignaLink" id="P29372"/>
<dbReference type="SIGNOR" id="P29372"/>
<dbReference type="BioGRID-ORCS" id="4350">
    <property type="hits" value="9 hits in 1158 CRISPR screens"/>
</dbReference>
<dbReference type="ChiTaRS" id="MPG">
    <property type="organism name" value="human"/>
</dbReference>
<dbReference type="EvolutionaryTrace" id="P29372"/>
<dbReference type="GeneWiki" id="MPG_(gene)"/>
<dbReference type="GenomeRNAi" id="4350"/>
<dbReference type="Pharos" id="P29372">
    <property type="development level" value="Tchem"/>
</dbReference>
<dbReference type="PRO" id="PR:P29372"/>
<dbReference type="Proteomes" id="UP000005640">
    <property type="component" value="Chromosome 16"/>
</dbReference>
<dbReference type="RNAct" id="P29372">
    <property type="molecule type" value="protein"/>
</dbReference>
<dbReference type="Bgee" id="ENSG00000103152">
    <property type="expression patterns" value="Expressed in ascending aorta and 194 other cell types or tissues"/>
</dbReference>
<dbReference type="ExpressionAtlas" id="P29372">
    <property type="expression patterns" value="baseline and differential"/>
</dbReference>
<dbReference type="GO" id="GO:0005829">
    <property type="term" value="C:cytosol"/>
    <property type="evidence" value="ECO:0000314"/>
    <property type="project" value="HPA"/>
</dbReference>
<dbReference type="GO" id="GO:0042645">
    <property type="term" value="C:mitochondrial nucleoid"/>
    <property type="evidence" value="ECO:0007669"/>
    <property type="project" value="UniProtKB-SubCell"/>
</dbReference>
<dbReference type="GO" id="GO:0005739">
    <property type="term" value="C:mitochondrion"/>
    <property type="evidence" value="ECO:0006056"/>
    <property type="project" value="FlyBase"/>
</dbReference>
<dbReference type="GO" id="GO:0005654">
    <property type="term" value="C:nucleoplasm"/>
    <property type="evidence" value="ECO:0000314"/>
    <property type="project" value="HPA"/>
</dbReference>
<dbReference type="GO" id="GO:0003905">
    <property type="term" value="F:alkylbase DNA N-glycosylase activity"/>
    <property type="evidence" value="ECO:0000318"/>
    <property type="project" value="GO_Central"/>
</dbReference>
<dbReference type="GO" id="GO:0003684">
    <property type="term" value="F:damaged DNA binding"/>
    <property type="evidence" value="ECO:0000304"/>
    <property type="project" value="ProtInc"/>
</dbReference>
<dbReference type="GO" id="GO:0003677">
    <property type="term" value="F:DNA binding"/>
    <property type="evidence" value="ECO:0000269"/>
    <property type="project" value="DisProt"/>
</dbReference>
<dbReference type="GO" id="GO:0019104">
    <property type="term" value="F:DNA N-glycosylase activity"/>
    <property type="evidence" value="ECO:0000304"/>
    <property type="project" value="Reactome"/>
</dbReference>
<dbReference type="GO" id="GO:0006284">
    <property type="term" value="P:base-excision repair"/>
    <property type="evidence" value="ECO:0000318"/>
    <property type="project" value="GO_Central"/>
</dbReference>
<dbReference type="GO" id="GO:0045007">
    <property type="term" value="P:depurination"/>
    <property type="evidence" value="ECO:0000304"/>
    <property type="project" value="Reactome"/>
</dbReference>
<dbReference type="GO" id="GO:0006307">
    <property type="term" value="P:DNA alkylation repair"/>
    <property type="evidence" value="ECO:0000304"/>
    <property type="project" value="ProtInc"/>
</dbReference>
<dbReference type="CDD" id="cd00540">
    <property type="entry name" value="AAG"/>
    <property type="match status" value="1"/>
</dbReference>
<dbReference type="FunFam" id="3.10.300.10:FF:000001">
    <property type="entry name" value="Putative 3-methyladenine DNA glycosylase"/>
    <property type="match status" value="1"/>
</dbReference>
<dbReference type="Gene3D" id="3.10.300.10">
    <property type="entry name" value="Methylpurine-DNA glycosylase (MPG)"/>
    <property type="match status" value="1"/>
</dbReference>
<dbReference type="HAMAP" id="MF_00527">
    <property type="entry name" value="3MGH"/>
    <property type="match status" value="1"/>
</dbReference>
<dbReference type="InterPro" id="IPR011034">
    <property type="entry name" value="Formyl_transferase-like_C_sf"/>
</dbReference>
<dbReference type="InterPro" id="IPR003180">
    <property type="entry name" value="MPG"/>
</dbReference>
<dbReference type="InterPro" id="IPR036995">
    <property type="entry name" value="MPG_sf"/>
</dbReference>
<dbReference type="NCBIfam" id="TIGR00567">
    <property type="entry name" value="3mg"/>
    <property type="match status" value="1"/>
</dbReference>
<dbReference type="PANTHER" id="PTHR10429">
    <property type="entry name" value="DNA-3-METHYLADENINE GLYCOSYLASE"/>
    <property type="match status" value="1"/>
</dbReference>
<dbReference type="PANTHER" id="PTHR10429:SF0">
    <property type="entry name" value="DNA-3-METHYLADENINE GLYCOSYLASE"/>
    <property type="match status" value="1"/>
</dbReference>
<dbReference type="Pfam" id="PF02245">
    <property type="entry name" value="Pur_DNA_glyco"/>
    <property type="match status" value="1"/>
</dbReference>
<dbReference type="SUPFAM" id="SSF50486">
    <property type="entry name" value="FMT C-terminal domain-like"/>
    <property type="match status" value="1"/>
</dbReference>
<comment type="function">
    <text>Hydrolysis of the deoxyribose N-glycosidic bond to excise 3-methyladenine, and 7-methylguanine from the damaged DNA polymer formed by alkylation lesions.</text>
</comment>
<comment type="catalytic activity">
    <reaction>
        <text>Hydrolysis of alkylated DNA, releasing 3-methyladenine, 3-methylguanine, 7-methylguanine and 7-methyladenine.</text>
        <dbReference type="EC" id="3.2.2.21"/>
    </reaction>
</comment>
<comment type="activity regulation">
    <text evidence="3">Binding to SSBP1 in mitochondria inhibits glycosylase activity in the context of a single-stranded DNA (ssDNA), but not a double-stranded DNA (dsDNA) substrates.</text>
</comment>
<comment type="subunit">
    <text>Binds MBD1. Binds SSBP1.</text>
</comment>
<comment type="interaction">
    <interactant intactId="EBI-1043398">
        <id>P29372</id>
    </interactant>
    <interactant intactId="EBI-742664">
        <id>Q9BPX1</id>
        <label>HSD17B14</label>
    </interactant>
    <organismsDiffer>false</organismsDiffer>
    <experiments>4</experiments>
</comment>
<comment type="interaction">
    <interactant intactId="EBI-1043398">
        <id>P29372</id>
    </interactant>
    <interactant intactId="EBI-977302">
        <id>P04156</id>
        <label>PRNP</label>
    </interactant>
    <organismsDiffer>false</organismsDiffer>
    <experiments>4</experiments>
</comment>
<comment type="interaction">
    <interactant intactId="EBI-10695618">
        <id>P29372-4</id>
    </interactant>
    <interactant intactId="EBI-742664">
        <id>Q9BPX1</id>
        <label>HSD17B14</label>
    </interactant>
    <organismsDiffer>false</organismsDiffer>
    <experiments>3</experiments>
</comment>
<comment type="interaction">
    <interactant intactId="EBI-10695618">
        <id>P29372-4</id>
    </interactant>
    <interactant intactId="EBI-744248">
        <id>P40692</id>
        <label>MLH1</label>
    </interactant>
    <organismsDiffer>false</organismsDiffer>
    <experiments>3</experiments>
</comment>
<comment type="subcellular location">
    <subcellularLocation>
        <location evidence="3">Cytoplasm</location>
    </subcellularLocation>
    <subcellularLocation>
        <location evidence="3">Mitochondrion matrix</location>
        <location evidence="3">Mitochondrion nucleoid</location>
    </subcellularLocation>
    <subcellularLocation>
        <location evidence="3">Nucleus</location>
    </subcellularLocation>
</comment>
<comment type="alternative products">
    <event type="alternative splicing"/>
    <isoform>
        <id>P29372-1</id>
        <name>1</name>
        <sequence type="displayed"/>
    </isoform>
    <isoform>
        <id>P29372-2</id>
        <name>2</name>
        <sequence type="described" ref="VSP_003249 VSP_035485"/>
    </isoform>
    <isoform>
        <id>P29372-4</id>
        <name>3</name>
        <sequence type="described" ref="VSP_003249"/>
    </isoform>
    <isoform>
        <id>P29372-5</id>
        <name>4</name>
        <sequence type="described" ref="VSP_046678"/>
    </isoform>
    <text>Experimental confirmation may be lacking for some isoforms.</text>
</comment>
<comment type="similarity">
    <text evidence="8">Belongs to the DNA glycosylase MPG family.</text>
</comment>
<reference key="1">
    <citation type="journal article" date="1991" name="Proc. Natl. Acad. Sci. U.S.A.">
        <title>Cloning and characterization of a 3-methyladenine DNA glycosylase cDNA from human cells whose gene maps to chromosome 16.</title>
        <authorList>
            <person name="Samson L."/>
            <person name="Derfler B."/>
            <person name="Boosalis M."/>
            <person name="Call K."/>
        </authorList>
    </citation>
    <scope>NUCLEOTIDE SEQUENCE [MRNA] (ISOFORM 1)</scope>
    <source>
        <tissue>Liver</tissue>
    </source>
</reference>
<reference key="2">
    <citation type="journal article" date="1993" name="Proc. Natl. Acad. Sci. U.S.A.">
        <title>Structure of the human 3-methyladenine DNA glycosylase gene and localization close to the 16p telomere.</title>
        <authorList>
            <person name="Vickers M.A."/>
            <person name="Vyas P."/>
            <person name="Harris P.C."/>
            <person name="Simmons D.L."/>
            <person name="Higgs D.R."/>
        </authorList>
    </citation>
    <scope>NUCLEOTIDE SEQUENCE [MRNA] (ISOFORM 2)</scope>
</reference>
<reference key="3">
    <citation type="submission" date="2003-02" db="EMBL/GenBank/DDBJ databases">
        <title>Identification of a human cell proliferation gene 11.</title>
        <authorList>
            <person name="Kim J.W."/>
        </authorList>
    </citation>
    <scope>NUCLEOTIDE SEQUENCE [MRNA] (ISOFORM 3)</scope>
</reference>
<reference key="4">
    <citation type="submission" date="2002-04" db="EMBL/GenBank/DDBJ databases">
        <authorList>
            <consortium name="NIEHS SNPs program"/>
        </authorList>
    </citation>
    <scope>NUCLEOTIDE SEQUENCE [GENOMIC DNA]</scope>
    <scope>VARIANTS GLN-22; HIS-71; VAL-258 AND SER-298</scope>
</reference>
<reference key="5">
    <citation type="journal article" date="2001" name="Hum. Mol. Genet.">
        <title>Sequence, structure and pathology of the fully annotated terminal 2 Mb of the short arm of human chromosome 16.</title>
        <authorList>
            <person name="Daniels R.J."/>
            <person name="Peden J.F."/>
            <person name="Lloyd C."/>
            <person name="Horsley S.W."/>
            <person name="Clark K."/>
            <person name="Tufarelli C."/>
            <person name="Kearney L."/>
            <person name="Buckle V.J."/>
            <person name="Doggett N.A."/>
            <person name="Flint J."/>
            <person name="Higgs D.R."/>
        </authorList>
    </citation>
    <scope>NUCLEOTIDE SEQUENCE [LARGE SCALE GENOMIC DNA]</scope>
</reference>
<reference key="6">
    <citation type="journal article" date="2004" name="Nature">
        <title>The sequence and analysis of duplication-rich human chromosome 16.</title>
        <authorList>
            <person name="Martin J."/>
            <person name="Han C."/>
            <person name="Gordon L.A."/>
            <person name="Terry A."/>
            <person name="Prabhakar S."/>
            <person name="She X."/>
            <person name="Xie G."/>
            <person name="Hellsten U."/>
            <person name="Chan Y.M."/>
            <person name="Altherr M."/>
            <person name="Couronne O."/>
            <person name="Aerts A."/>
            <person name="Bajorek E."/>
            <person name="Black S."/>
            <person name="Blumer H."/>
            <person name="Branscomb E."/>
            <person name="Brown N.C."/>
            <person name="Bruno W.J."/>
            <person name="Buckingham J.M."/>
            <person name="Callen D.F."/>
            <person name="Campbell C.S."/>
            <person name="Campbell M.L."/>
            <person name="Campbell E.W."/>
            <person name="Caoile C."/>
            <person name="Challacombe J.F."/>
            <person name="Chasteen L.A."/>
            <person name="Chertkov O."/>
            <person name="Chi H.C."/>
            <person name="Christensen M."/>
            <person name="Clark L.M."/>
            <person name="Cohn J.D."/>
            <person name="Denys M."/>
            <person name="Detter J.C."/>
            <person name="Dickson M."/>
            <person name="Dimitrijevic-Bussod M."/>
            <person name="Escobar J."/>
            <person name="Fawcett J.J."/>
            <person name="Flowers D."/>
            <person name="Fotopulos D."/>
            <person name="Glavina T."/>
            <person name="Gomez M."/>
            <person name="Gonzales E."/>
            <person name="Goodstein D."/>
            <person name="Goodwin L.A."/>
            <person name="Grady D.L."/>
            <person name="Grigoriev I."/>
            <person name="Groza M."/>
            <person name="Hammon N."/>
            <person name="Hawkins T."/>
            <person name="Haydu L."/>
            <person name="Hildebrand C.E."/>
            <person name="Huang W."/>
            <person name="Israni S."/>
            <person name="Jett J."/>
            <person name="Jewett P.B."/>
            <person name="Kadner K."/>
            <person name="Kimball H."/>
            <person name="Kobayashi A."/>
            <person name="Krawczyk M.-C."/>
            <person name="Leyba T."/>
            <person name="Longmire J.L."/>
            <person name="Lopez F."/>
            <person name="Lou Y."/>
            <person name="Lowry S."/>
            <person name="Ludeman T."/>
            <person name="Manohar C.F."/>
            <person name="Mark G.A."/>
            <person name="McMurray K.L."/>
            <person name="Meincke L.J."/>
            <person name="Morgan J."/>
            <person name="Moyzis R.K."/>
            <person name="Mundt M.O."/>
            <person name="Munk A.C."/>
            <person name="Nandkeshwar R.D."/>
            <person name="Pitluck S."/>
            <person name="Pollard M."/>
            <person name="Predki P."/>
            <person name="Parson-Quintana B."/>
            <person name="Ramirez L."/>
            <person name="Rash S."/>
            <person name="Retterer J."/>
            <person name="Ricke D.O."/>
            <person name="Robinson D.L."/>
            <person name="Rodriguez A."/>
            <person name="Salamov A."/>
            <person name="Saunders E.H."/>
            <person name="Scott D."/>
            <person name="Shough T."/>
            <person name="Stallings R.L."/>
            <person name="Stalvey M."/>
            <person name="Sutherland R.D."/>
            <person name="Tapia R."/>
            <person name="Tesmer J.G."/>
            <person name="Thayer N."/>
            <person name="Thompson L.S."/>
            <person name="Tice H."/>
            <person name="Torney D.C."/>
            <person name="Tran-Gyamfi M."/>
            <person name="Tsai M."/>
            <person name="Ulanovsky L.E."/>
            <person name="Ustaszewska A."/>
            <person name="Vo N."/>
            <person name="White P.S."/>
            <person name="Williams A.L."/>
            <person name="Wills P.L."/>
            <person name="Wu J.-R."/>
            <person name="Wu K."/>
            <person name="Yang J."/>
            <person name="DeJong P."/>
            <person name="Bruce D."/>
            <person name="Doggett N.A."/>
            <person name="Deaven L."/>
            <person name="Schmutz J."/>
            <person name="Grimwood J."/>
            <person name="Richardson P."/>
            <person name="Rokhsar D.S."/>
            <person name="Eichler E.E."/>
            <person name="Gilna P."/>
            <person name="Lucas S.M."/>
            <person name="Myers R.M."/>
            <person name="Rubin E.M."/>
            <person name="Pennacchio L.A."/>
        </authorList>
    </citation>
    <scope>NUCLEOTIDE SEQUENCE [LARGE SCALE GENOMIC DNA]</scope>
</reference>
<reference key="7">
    <citation type="submission" date="2005-07" db="EMBL/GenBank/DDBJ databases">
        <authorList>
            <person name="Mural R.J."/>
            <person name="Istrail S."/>
            <person name="Sutton G.G."/>
            <person name="Florea L."/>
            <person name="Halpern A.L."/>
            <person name="Mobarry C.M."/>
            <person name="Lippert R."/>
            <person name="Walenz B."/>
            <person name="Shatkay H."/>
            <person name="Dew I."/>
            <person name="Miller J.R."/>
            <person name="Flanigan M.J."/>
            <person name="Edwards N.J."/>
            <person name="Bolanos R."/>
            <person name="Fasulo D."/>
            <person name="Halldorsson B.V."/>
            <person name="Hannenhalli S."/>
            <person name="Turner R."/>
            <person name="Yooseph S."/>
            <person name="Lu F."/>
            <person name="Nusskern D.R."/>
            <person name="Shue B.C."/>
            <person name="Zheng X.H."/>
            <person name="Zhong F."/>
            <person name="Delcher A.L."/>
            <person name="Huson D.H."/>
            <person name="Kravitz S.A."/>
            <person name="Mouchard L."/>
            <person name="Reinert K."/>
            <person name="Remington K.A."/>
            <person name="Clark A.G."/>
            <person name="Waterman M.S."/>
            <person name="Eichler E.E."/>
            <person name="Adams M.D."/>
            <person name="Hunkapiller M.W."/>
            <person name="Myers E.W."/>
            <person name="Venter J.C."/>
        </authorList>
    </citation>
    <scope>NUCLEOTIDE SEQUENCE [LARGE SCALE GENOMIC DNA]</scope>
</reference>
<reference key="8">
    <citation type="journal article" date="2004" name="Genome Res.">
        <title>The status, quality, and expansion of the NIH full-length cDNA project: the Mammalian Gene Collection (MGC).</title>
        <authorList>
            <consortium name="The MGC Project Team"/>
        </authorList>
    </citation>
    <scope>NUCLEOTIDE SEQUENCE [LARGE SCALE MRNA] (ISOFORM 2)</scope>
    <source>
        <tissue>Pancreas</tissue>
    </source>
</reference>
<reference key="9">
    <citation type="journal article" date="1991" name="J. Biol. Chem.">
        <title>Cloning and expression in Escherichia coli of a human cDNA encoding the DNA repair protein N-methylpurine-DNA glycosylase.</title>
        <authorList>
            <person name="Chakravarti D."/>
            <person name="Ibeanu G.C."/>
            <person name="Tano K."/>
            <person name="Mitra S."/>
        </authorList>
    </citation>
    <scope>NUCLEOTIDE SEQUENCE [MRNA] OF 28-298 (ISOFORMS 1/2)</scope>
</reference>
<reference key="10">
    <citation type="journal article" date="1991" name="Biochem. Biophys. Res. Commun.">
        <title>Human cDNA expressing a functional DNA glycosylase excising 3-methyladenine and 7-methylguanine.</title>
        <authorList>
            <person name="O'Connor T.R."/>
            <person name="Laval J."/>
        </authorList>
    </citation>
    <scope>NUCLEOTIDE SEQUENCE [MRNA] OF 69-298 (ISOFORMS 1/2)</scope>
</reference>
<reference key="11">
    <citation type="journal article" date="1993" name="Mamm. Genome">
        <title>Homology of a 130-kb region enclosing the alpha-globin gene cluster, the alpha-locus controlling region, and two non-globin genes in human and mouse.</title>
        <authorList>
            <person name="Kielman M.F."/>
            <person name="Smits R."/>
            <person name="Devi T.S."/>
            <person name="Fodde R."/>
            <person name="Bernini L.F."/>
        </authorList>
    </citation>
    <scope>NUCLEOTIDE SEQUENCE [MRNA] OF 230-298 (ISOFORMS 1/2)</scope>
</reference>
<reference key="12">
    <citation type="journal article" date="2003" name="Proc. Natl. Acad. Sci. U.S.A.">
        <title>Methylated DNA-binding domain 1 and methylpurine-DNA glycosylase link transcriptional repression and DNA repair in chromatin.</title>
        <authorList>
            <person name="Watanabe S."/>
            <person name="Ichimura T."/>
            <person name="Fujita N."/>
            <person name="Tsuruzoe S."/>
            <person name="Ohki I."/>
            <person name="Shirakawa M."/>
            <person name="Kawasuji M."/>
            <person name="Nakao M."/>
        </authorList>
    </citation>
    <scope>INTERACTION WITH MBD1</scope>
</reference>
<reference key="13">
    <citation type="journal article" date="2008" name="Proc. Natl. Acad. Sci. U.S.A.">
        <title>A quantitative atlas of mitotic phosphorylation.</title>
        <authorList>
            <person name="Dephoure N."/>
            <person name="Zhou C."/>
            <person name="Villen J."/>
            <person name="Beausoleil S.A."/>
            <person name="Bakalarski C.E."/>
            <person name="Elledge S.J."/>
            <person name="Gygi S.P."/>
        </authorList>
    </citation>
    <scope>PHOSPHORYLATION [LARGE SCALE ANALYSIS] AT SER-78</scope>
    <scope>IDENTIFICATION BY MASS SPECTROMETRY [LARGE SCALE ANALYSIS]</scope>
    <source>
        <tissue>Cervix carcinoma</tissue>
    </source>
</reference>
<reference key="14">
    <citation type="journal article" date="2011" name="BMC Syst. Biol.">
        <title>Initial characterization of the human central proteome.</title>
        <authorList>
            <person name="Burkard T.R."/>
            <person name="Planyavsky M."/>
            <person name="Kaupe I."/>
            <person name="Breitwieser F.P."/>
            <person name="Buerckstuemmer T."/>
            <person name="Bennett K.L."/>
            <person name="Superti-Furga G."/>
            <person name="Colinge J."/>
        </authorList>
    </citation>
    <scope>IDENTIFICATION BY MASS SPECTROMETRY [LARGE SCALE ANALYSIS]</scope>
</reference>
<reference key="15">
    <citation type="journal article" date="2013" name="DNA Repair">
        <title>Alkyladenine DNA glycosylase (AAG) localizes to mitochondria and interacts with mitochondrial single-stranded binding protein (mtSSB).</title>
        <authorList>
            <person name="van Loon B."/>
            <person name="Samson L.D."/>
        </authorList>
    </citation>
    <scope>SUBCELLULAR LOCATION</scope>
    <scope>INTERACTION WITH SSBP1</scope>
    <scope>ACTIVITY REGULATION</scope>
</reference>
<reference key="16">
    <citation type="journal article" date="2013" name="J. Proteome Res.">
        <title>Toward a comprehensive characterization of a human cancer cell phosphoproteome.</title>
        <authorList>
            <person name="Zhou H."/>
            <person name="Di Palma S."/>
            <person name="Preisinger C."/>
            <person name="Peng M."/>
            <person name="Polat A.N."/>
            <person name="Heck A.J."/>
            <person name="Mohammed S."/>
        </authorList>
    </citation>
    <scope>PHOSPHORYLATION [LARGE SCALE ANALYSIS] AT SER-252</scope>
    <scope>IDENTIFICATION BY MASS SPECTROMETRY [LARGE SCALE ANALYSIS]</scope>
    <source>
        <tissue>Erythroleukemia</tissue>
    </source>
</reference>
<reference key="17">
    <citation type="journal article" date="1998" name="Cell">
        <title>Crystal structure of a human alkylbase-DNA repair enzyme complexed to DNA: mechanisms for nucleotide flipping and base excision.</title>
        <authorList>
            <person name="Lau A.Y."/>
            <person name="Scharer O.D."/>
            <person name="Samson L."/>
            <person name="Verdine G.L."/>
            <person name="Ellenberger T."/>
        </authorList>
    </citation>
    <scope>X-RAY CRYSTALLOGRAPHY (2.7 ANGSTROMS) OF 80-199</scope>
</reference>
<name>3MG_HUMAN</name>
<keyword id="KW-0002">3D-structure</keyword>
<keyword id="KW-0025">Alternative splicing</keyword>
<keyword id="KW-0963">Cytoplasm</keyword>
<keyword id="KW-0227">DNA damage</keyword>
<keyword id="KW-0234">DNA repair</keyword>
<keyword id="KW-0378">Hydrolase</keyword>
<keyword id="KW-0496">Mitochondrion</keyword>
<keyword id="KW-1135">Mitochondrion nucleoid</keyword>
<keyword id="KW-0539">Nucleus</keyword>
<keyword id="KW-0597">Phosphoprotein</keyword>
<keyword id="KW-1267">Proteomics identification</keyword>
<keyword id="KW-1185">Reference proteome</keyword>
<keyword id="KW-0809">Transit peptide</keyword>
<evidence type="ECO:0000255" key="1"/>
<evidence type="ECO:0000256" key="2">
    <source>
        <dbReference type="SAM" id="MobiDB-lite"/>
    </source>
</evidence>
<evidence type="ECO:0000269" key="3">
    <source>
    </source>
</evidence>
<evidence type="ECO:0000269" key="4">
    <source ref="4"/>
</evidence>
<evidence type="ECO:0000303" key="5">
    <source>
    </source>
</evidence>
<evidence type="ECO:0000303" key="6">
    <source>
    </source>
</evidence>
<evidence type="ECO:0000303" key="7">
    <source ref="3"/>
</evidence>
<evidence type="ECO:0000305" key="8"/>
<evidence type="ECO:0007744" key="9">
    <source>
    </source>
</evidence>
<evidence type="ECO:0007744" key="10">
    <source>
    </source>
</evidence>
<evidence type="ECO:0007829" key="11">
    <source>
        <dbReference type="PDB" id="1F6O"/>
    </source>
</evidence>
<evidence type="ECO:0007829" key="12">
    <source>
        <dbReference type="PDB" id="3UBY"/>
    </source>
</evidence>
<evidence type="ECO:0007829" key="13">
    <source>
        <dbReference type="PDB" id="7XFH"/>
    </source>
</evidence>
<evidence type="ECO:0007829" key="14">
    <source>
        <dbReference type="PDB" id="7XFM"/>
    </source>
</evidence>
<gene>
    <name type="primary">MPG</name>
    <name type="synonym">AAG</name>
    <name type="synonym">ANPG</name>
    <name type="synonym">MID1</name>
</gene>
<protein>
    <recommendedName>
        <fullName>DNA-3-methyladenine glycosylase</fullName>
        <ecNumber>3.2.2.21</ecNumber>
    </recommendedName>
    <alternativeName>
        <fullName>3-alkyladenine DNA glycosylase</fullName>
    </alternativeName>
    <alternativeName>
        <fullName>3-methyladenine DNA glycosidase</fullName>
    </alternativeName>
    <alternativeName>
        <fullName>ADPG</fullName>
    </alternativeName>
    <alternativeName>
        <fullName>N-methylpurine-DNA glycosylase</fullName>
    </alternativeName>
</protein>
<sequence length="298" mass="32869">MVTPALQMKKPKQFCRRMGQKKQRPARAGQPHSSSDAAQAPAEQPHSSSDAAQAPCPRERCLGPPTTPGPYRSIYFSSPKGHLTRLGLEFFDQPAVPLARAFLGQVLVRRLPNGTELRGRIVETEAYLGPEDEAAHSRGGRQTPRNRGMFMKPGTLYVYIIYGMYFCMNISSQGDGACVLLRALEPLEGLETMRQLRSTLRKGTASRVLKDRELCSGPSKLCQALAINKSFDQRDLAQDEAVWLERGPLEPSEPAVVAAARVGVGHAGEWARKPLRFYVRGSPWVSVVDRVAEQDTQA</sequence>
<organism>
    <name type="scientific">Homo sapiens</name>
    <name type="common">Human</name>
    <dbReference type="NCBI Taxonomy" id="9606"/>
    <lineage>
        <taxon>Eukaryota</taxon>
        <taxon>Metazoa</taxon>
        <taxon>Chordata</taxon>
        <taxon>Craniata</taxon>
        <taxon>Vertebrata</taxon>
        <taxon>Euteleostomi</taxon>
        <taxon>Mammalia</taxon>
        <taxon>Eutheria</taxon>
        <taxon>Euarchontoglires</taxon>
        <taxon>Primates</taxon>
        <taxon>Haplorrhini</taxon>
        <taxon>Catarrhini</taxon>
        <taxon>Hominidae</taxon>
        <taxon>Homo</taxon>
    </lineage>
</organism>
<feature type="transit peptide" description="Mitochondrion" evidence="1">
    <location>
        <begin position="1"/>
        <end position="17"/>
    </location>
</feature>
<feature type="chain" id="PRO_0000100065" description="DNA-3-methyladenine glycosylase">
    <location>
        <begin position="18"/>
        <end position="298"/>
    </location>
</feature>
<feature type="region of interest" description="Disordered" evidence="2">
    <location>
        <begin position="1"/>
        <end position="65"/>
    </location>
</feature>
<feature type="compositionally biased region" description="Basic residues" evidence="2">
    <location>
        <begin position="9"/>
        <end position="25"/>
    </location>
</feature>
<feature type="modified residue" description="Phosphoserine" evidence="9">
    <location>
        <position position="78"/>
    </location>
</feature>
<feature type="modified residue" description="Phosphoserine" evidence="10">
    <location>
        <position position="252"/>
    </location>
</feature>
<feature type="splice variant" id="VSP_046678" description="In isoform 4." evidence="8">
    <location>
        <begin position="1"/>
        <end position="17"/>
    </location>
</feature>
<feature type="splice variant" id="VSP_003249" description="In isoform 2 and isoform 3." evidence="5 6 7">
    <original>MVTPALQMKKPK</original>
    <variation>MPARSGA</variation>
    <location>
        <begin position="1"/>
        <end position="12"/>
    </location>
</feature>
<feature type="splice variant" id="VSP_035485" description="In isoform 2." evidence="5 6">
    <original>QL</original>
    <variation>HV</variation>
    <location>
        <begin position="195"/>
        <end position="196"/>
    </location>
</feature>
<feature type="sequence variant" id="VAR_019138" description="In dbSNP:rs3176383." evidence="4">
    <original>K</original>
    <variation>Q</variation>
    <location>
        <position position="22"/>
    </location>
</feature>
<feature type="sequence variant" id="VAR_014831" description="In dbSNP:rs2308315.">
    <original>P</original>
    <variation>L</variation>
    <location>
        <position position="64"/>
    </location>
</feature>
<feature type="sequence variant" id="VAR_014832" description="In dbSNP:rs2266607." evidence="4">
    <original>Y</original>
    <variation>H</variation>
    <location>
        <position position="71"/>
    </location>
</feature>
<feature type="sequence variant" id="VAR_050096" description="In dbSNP:rs25671.">
    <original>Q</original>
    <variation>R</variation>
    <location>
        <position position="93"/>
    </location>
</feature>
<feature type="sequence variant" id="VAR_014833" description="In dbSNP:rs2308313.">
    <original>R</original>
    <variation>C</variation>
    <location>
        <position position="120"/>
    </location>
</feature>
<feature type="sequence variant" id="VAR_014834" description="In dbSNP:rs2308312.">
    <original>R</original>
    <variation>Q</variation>
    <location>
        <position position="141"/>
    </location>
</feature>
<feature type="sequence variant" id="VAR_014835" description="In dbSNP:rs769193." evidence="4">
    <original>A</original>
    <variation>V</variation>
    <location>
        <position position="258"/>
    </location>
</feature>
<feature type="sequence variant" id="VAR_014836" description="In dbSNP:rs2234949." evidence="4">
    <original>A</original>
    <variation>S</variation>
    <location>
        <position position="298"/>
    </location>
</feature>
<feature type="sequence conflict" description="In Ref. 5; AAK61213." evidence="8" ref="5">
    <original>Q</original>
    <variation>QV</variation>
    <location>
        <position position="13"/>
    </location>
</feature>
<feature type="sequence conflict" description="In Ref. 9; AAB19537." evidence="8" ref="9">
    <original>GQP</original>
    <variation>ARA</variation>
    <location>
        <begin position="29"/>
        <end position="31"/>
    </location>
</feature>
<feature type="sequence conflict" description="In Ref. 9; AAB19537." evidence="8" ref="9">
    <original>Q</original>
    <variation>R</variation>
    <location>
        <position position="44"/>
    </location>
</feature>
<feature type="sequence conflict" description="In Ref. 10; AAA58369/CAA39875." evidence="8" ref="10">
    <original>GPY</original>
    <variation>SKD</variation>
    <location>
        <begin position="69"/>
        <end position="71"/>
    </location>
</feature>
<feature type="sequence conflict" description="In Ref. 10; AAA58369/CAA39875." evidence="8" ref="10">
    <original>H</original>
    <variation>L</variation>
    <location>
        <position position="82"/>
    </location>
</feature>
<feature type="sequence conflict" description="In Ref. 1; AAA58627." evidence="8" ref="1">
    <original>A</original>
    <variation>P</variation>
    <location>
        <position position="134"/>
    </location>
</feature>
<feature type="sequence conflict" description="In Ref. 10; AAA58369." evidence="8" ref="10">
    <original>V</original>
    <variation>E</variation>
    <location>
        <position position="287"/>
    </location>
</feature>
<feature type="helix" evidence="11">
    <location>
        <begin position="82"/>
        <end position="84"/>
    </location>
</feature>
<feature type="helix" evidence="12">
    <location>
        <begin position="88"/>
        <end position="91"/>
    </location>
</feature>
<feature type="helix" evidence="12">
    <location>
        <begin position="95"/>
        <end position="101"/>
    </location>
</feature>
<feature type="turn" evidence="12">
    <location>
        <begin position="102"/>
        <end position="104"/>
    </location>
</feature>
<feature type="strand" evidence="12">
    <location>
        <begin position="106"/>
        <end position="110"/>
    </location>
</feature>
<feature type="turn" evidence="13">
    <location>
        <begin position="112"/>
        <end position="114"/>
    </location>
</feature>
<feature type="strand" evidence="12">
    <location>
        <begin position="116"/>
        <end position="127"/>
    </location>
</feature>
<feature type="strand" evidence="11">
    <location>
        <begin position="129"/>
        <end position="131"/>
    </location>
</feature>
<feature type="helix" evidence="12">
    <location>
        <begin position="138"/>
        <end position="140"/>
    </location>
</feature>
<feature type="helix" evidence="12">
    <location>
        <begin position="145"/>
        <end position="150"/>
    </location>
</feature>
<feature type="strand" evidence="14">
    <location>
        <begin position="152"/>
        <end position="154"/>
    </location>
</feature>
<feature type="strand" evidence="12">
    <location>
        <begin position="155"/>
        <end position="161"/>
    </location>
</feature>
<feature type="turn" evidence="12">
    <location>
        <begin position="162"/>
        <end position="164"/>
    </location>
</feature>
<feature type="strand" evidence="12">
    <location>
        <begin position="165"/>
        <end position="171"/>
    </location>
</feature>
<feature type="strand" evidence="13">
    <location>
        <begin position="173"/>
        <end position="176"/>
    </location>
</feature>
<feature type="strand" evidence="12">
    <location>
        <begin position="178"/>
        <end position="188"/>
    </location>
</feature>
<feature type="helix" evidence="12">
    <location>
        <begin position="190"/>
        <end position="199"/>
    </location>
</feature>
<feature type="helix" evidence="12">
    <location>
        <begin position="211"/>
        <end position="213"/>
    </location>
</feature>
<feature type="strand" evidence="12">
    <location>
        <begin position="214"/>
        <end position="217"/>
    </location>
</feature>
<feature type="helix" evidence="12">
    <location>
        <begin position="218"/>
        <end position="224"/>
    </location>
</feature>
<feature type="helix" evidence="12">
    <location>
        <begin position="229"/>
        <end position="231"/>
    </location>
</feature>
<feature type="turn" evidence="12">
    <location>
        <begin position="236"/>
        <end position="238"/>
    </location>
</feature>
<feature type="strand" evidence="12">
    <location>
        <begin position="240"/>
        <end position="245"/>
    </location>
</feature>
<feature type="helix" evidence="12">
    <location>
        <begin position="253"/>
        <end position="255"/>
    </location>
</feature>
<feature type="strand" evidence="12">
    <location>
        <begin position="256"/>
        <end position="259"/>
    </location>
</feature>
<feature type="strand" evidence="14">
    <location>
        <begin position="262"/>
        <end position="264"/>
    </location>
</feature>
<feature type="turn" evidence="12">
    <location>
        <begin position="268"/>
        <end position="272"/>
    </location>
</feature>
<feature type="strand" evidence="12">
    <location>
        <begin position="276"/>
        <end position="279"/>
    </location>
</feature>
<feature type="turn" evidence="12">
    <location>
        <begin position="290"/>
        <end position="292"/>
    </location>
</feature>